<sequence>MAAAVAMRGSSSDGGGYDKVSGMDSGKYVRYTPEQVEALERVYADCPKPTSSRRQQLLRECPILANIEPKQIKVWFQNRRCRDKQRKESSRLQAVNRKLTAMNKLLMEENERLQKQVSQLVHENAHMRQQLQNTPLANDTSCESNVTTPQNPLRDASNPSGLLSIAEETLTEFLSKATGTAIDWVQMPGMKPGPDSVGIVAISHGCRGVAARACGLVNLEPTKVVEILKDRPSWFRDCRNLEVFTMIPAGNGGTVELVYTQLYAPTTLVPARDFWTLRYTTTMEDGSLVVCERSLSGSGGGPSAASAQQYVRAEMLPSGYLVRPCEGGGSIVHIVDHLDLEAWSVPEVLRPLYESSRVVAQKMTTAALRHIRQIAQETSGEVVYALGRQPAVLRTFSQRLSRGFNDAISGFNDDGWSIMGGDGVEDVVIACNSTKKIRSNSNAGIAFGAPGGIICAKASMLLQSVPPAVLVRFLREHRSEWADYNIDAYLASTLKTSACSLPGLRPMRFSGSQIIIPLAHTVENEEILEVVRLEGQPLTHDEALLSRDIHLLQLCTGIDEKSVGSSFQLVFAPIDDFPDETPLISSGFRVIPLDMKTDGASSGRTLDLASSLEVGSATAQASGDASADDCNLRSVLTIAFQFPYELHLQDSVAAMARQYVRSIVSAVQRVSMAISPSQTGLNAGQRIISGFPEAATLARWVCQSYHYHLGVELLSQSDGDAEQLLKMLWHYQDAILCCSFKEKPVFTFANKAGLDMLETSLVALQDLTLDRIFDEPGKEALFSNIPKLMEQGHVYLPSGVCMSGMGRHVSFDQAVAWKVLAEDSNVHCLAFCFVNWSFV</sequence>
<gene>
    <name type="primary">HOX10</name>
    <name type="synonym">HB1</name>
    <name type="ORF">OsI_009462</name>
</gene>
<proteinExistence type="evidence at transcript level"/>
<keyword id="KW-0175">Coiled coil</keyword>
<keyword id="KW-0238">DNA-binding</keyword>
<keyword id="KW-0371">Homeobox</keyword>
<keyword id="KW-0539">Nucleus</keyword>
<keyword id="KW-1185">Reference proteome</keyword>
<keyword id="KW-0804">Transcription</keyword>
<keyword id="KW-0805">Transcription regulation</keyword>
<dbReference type="EMBL" id="CM000128">
    <property type="protein sequence ID" value="EAY88229.1"/>
    <property type="status" value="ALT_SEQ"/>
    <property type="molecule type" value="Genomic_DNA"/>
</dbReference>
<dbReference type="EMBL" id="AY554035">
    <property type="protein sequence ID" value="AAS83423.1"/>
    <property type="molecule type" value="mRNA"/>
</dbReference>
<dbReference type="EMBL" id="EF555531">
    <property type="protein sequence ID" value="ABQ57272.1"/>
    <property type="molecule type" value="mRNA"/>
</dbReference>
<dbReference type="SMR" id="A2XBL9"/>
<dbReference type="STRING" id="39946.A2XBL9"/>
<dbReference type="EnsemblPlants" id="OsGoSa_03g0000830.01">
    <property type="protein sequence ID" value="OsGoSa_03g0000830.01"/>
    <property type="gene ID" value="OsGoSa_03g0000830"/>
</dbReference>
<dbReference type="EnsemblPlants" id="OsKYG_03g0000880.01">
    <property type="protein sequence ID" value="OsKYG_03g0000880.01"/>
    <property type="gene ID" value="OsKYG_03g0000880"/>
</dbReference>
<dbReference type="EnsemblPlants" id="OsLaMu_03g0000850.01">
    <property type="protein sequence ID" value="OsLaMu_03g0000850.01"/>
    <property type="gene ID" value="OsLaMu_03g0000850"/>
</dbReference>
<dbReference type="EnsemblPlants" id="OsLima_03g0000860.01">
    <property type="protein sequence ID" value="OsLima_03g0000860.01"/>
    <property type="gene ID" value="OsLima_03g0000860"/>
</dbReference>
<dbReference type="EnsemblPlants" id="OsLiXu_03g0000840.01">
    <property type="protein sequence ID" value="OsLiXu_03g0000840.01"/>
    <property type="gene ID" value="OsLiXu_03g0000840"/>
</dbReference>
<dbReference type="EnsemblPlants" id="OsMH63_03G000830_03">
    <property type="protein sequence ID" value="OsMH63_03G000830_03"/>
    <property type="gene ID" value="OsMH63_03G000830"/>
</dbReference>
<dbReference type="EnsemblPlants" id="OsPr106_03g0000830.01">
    <property type="protein sequence ID" value="OsPr106_03g0000830.01"/>
    <property type="gene ID" value="OsPr106_03g0000830"/>
</dbReference>
<dbReference type="EnsemblPlants" id="OsZS97_03G000840_03">
    <property type="protein sequence ID" value="OsZS97_03G000840_03"/>
    <property type="gene ID" value="OsZS97_03G000840"/>
</dbReference>
<dbReference type="Gramene" id="OsGoSa_03g0000830.01">
    <property type="protein sequence ID" value="OsGoSa_03g0000830.01"/>
    <property type="gene ID" value="OsGoSa_03g0000830"/>
</dbReference>
<dbReference type="Gramene" id="OsKYG_03g0000880.01">
    <property type="protein sequence ID" value="OsKYG_03g0000880.01"/>
    <property type="gene ID" value="OsKYG_03g0000880"/>
</dbReference>
<dbReference type="Gramene" id="OsLaMu_03g0000850.01">
    <property type="protein sequence ID" value="OsLaMu_03g0000850.01"/>
    <property type="gene ID" value="OsLaMu_03g0000850"/>
</dbReference>
<dbReference type="Gramene" id="OsLima_03g0000860.01">
    <property type="protein sequence ID" value="OsLima_03g0000860.01"/>
    <property type="gene ID" value="OsLima_03g0000860"/>
</dbReference>
<dbReference type="Gramene" id="OsLiXu_03g0000840.01">
    <property type="protein sequence ID" value="OsLiXu_03g0000840.01"/>
    <property type="gene ID" value="OsLiXu_03g0000840"/>
</dbReference>
<dbReference type="Gramene" id="OsMH63_03G000830_03">
    <property type="protein sequence ID" value="OsMH63_03G000830_03"/>
    <property type="gene ID" value="OsMH63_03G000830"/>
</dbReference>
<dbReference type="Gramene" id="OsPr106_03g0000830.01">
    <property type="protein sequence ID" value="OsPr106_03g0000830.01"/>
    <property type="gene ID" value="OsPr106_03g0000830"/>
</dbReference>
<dbReference type="Gramene" id="OsZS97_03G000840_03">
    <property type="protein sequence ID" value="OsZS97_03G000840_03"/>
    <property type="gene ID" value="OsZS97_03G000840"/>
</dbReference>
<dbReference type="HOGENOM" id="CLU_012517_0_0_1"/>
<dbReference type="OrthoDB" id="125004at2759"/>
<dbReference type="Proteomes" id="UP000007015">
    <property type="component" value="Chromosome 3"/>
</dbReference>
<dbReference type="GO" id="GO:0005634">
    <property type="term" value="C:nucleus"/>
    <property type="evidence" value="ECO:0007669"/>
    <property type="project" value="UniProtKB-SubCell"/>
</dbReference>
<dbReference type="GO" id="GO:0003677">
    <property type="term" value="F:DNA binding"/>
    <property type="evidence" value="ECO:0007669"/>
    <property type="project" value="UniProtKB-KW"/>
</dbReference>
<dbReference type="GO" id="GO:0003700">
    <property type="term" value="F:DNA-binding transcription factor activity"/>
    <property type="evidence" value="ECO:0007669"/>
    <property type="project" value="InterPro"/>
</dbReference>
<dbReference type="GO" id="GO:0008289">
    <property type="term" value="F:lipid binding"/>
    <property type="evidence" value="ECO:0007669"/>
    <property type="project" value="InterPro"/>
</dbReference>
<dbReference type="CDD" id="cd14686">
    <property type="entry name" value="bZIP"/>
    <property type="match status" value="1"/>
</dbReference>
<dbReference type="CDD" id="cd00086">
    <property type="entry name" value="homeodomain"/>
    <property type="match status" value="1"/>
</dbReference>
<dbReference type="CDD" id="cd08875">
    <property type="entry name" value="START_ArGLABRA2_like"/>
    <property type="match status" value="1"/>
</dbReference>
<dbReference type="FunFam" id="1.10.10.60:FF:000197">
    <property type="entry name" value="Homeobox-leucine zipper protein REVOLUTA"/>
    <property type="match status" value="1"/>
</dbReference>
<dbReference type="Gene3D" id="3.30.530.20">
    <property type="match status" value="1"/>
</dbReference>
<dbReference type="Gene3D" id="1.10.10.60">
    <property type="entry name" value="Homeodomain-like"/>
    <property type="match status" value="1"/>
</dbReference>
<dbReference type="InterPro" id="IPR001356">
    <property type="entry name" value="HD"/>
</dbReference>
<dbReference type="InterPro" id="IPR044830">
    <property type="entry name" value="HD-Zip_III"/>
</dbReference>
<dbReference type="InterPro" id="IPR009057">
    <property type="entry name" value="Homeodomain-like_sf"/>
</dbReference>
<dbReference type="InterPro" id="IPR013978">
    <property type="entry name" value="MEKHLA"/>
</dbReference>
<dbReference type="InterPro" id="IPR023393">
    <property type="entry name" value="START-like_dom_sf"/>
</dbReference>
<dbReference type="InterPro" id="IPR002913">
    <property type="entry name" value="START_lipid-bd_dom"/>
</dbReference>
<dbReference type="PANTHER" id="PTHR45950">
    <property type="entry name" value="HOMEOBOX-LEUCINE ZIPPER PROTEIN ATHB-14"/>
    <property type="match status" value="1"/>
</dbReference>
<dbReference type="PANTHER" id="PTHR45950:SF28">
    <property type="entry name" value="HOMEOBOX-LEUCINE ZIPPER PROTEIN HOX10"/>
    <property type="match status" value="1"/>
</dbReference>
<dbReference type="Pfam" id="PF00046">
    <property type="entry name" value="Homeodomain"/>
    <property type="match status" value="1"/>
</dbReference>
<dbReference type="Pfam" id="PF08670">
    <property type="entry name" value="MEKHLA"/>
    <property type="match status" value="1"/>
</dbReference>
<dbReference type="Pfam" id="PF01852">
    <property type="entry name" value="START"/>
    <property type="match status" value="1"/>
</dbReference>
<dbReference type="SMART" id="SM00389">
    <property type="entry name" value="HOX"/>
    <property type="match status" value="1"/>
</dbReference>
<dbReference type="SMART" id="SM00234">
    <property type="entry name" value="START"/>
    <property type="match status" value="1"/>
</dbReference>
<dbReference type="SUPFAM" id="SSF55961">
    <property type="entry name" value="Bet v1-like"/>
    <property type="match status" value="1"/>
</dbReference>
<dbReference type="SUPFAM" id="SSF46689">
    <property type="entry name" value="Homeodomain-like"/>
    <property type="match status" value="1"/>
</dbReference>
<dbReference type="PROSITE" id="PS50071">
    <property type="entry name" value="HOMEOBOX_2"/>
    <property type="match status" value="1"/>
</dbReference>
<dbReference type="PROSITE" id="PS50848">
    <property type="entry name" value="START"/>
    <property type="match status" value="1"/>
</dbReference>
<organism>
    <name type="scientific">Oryza sativa subsp. indica</name>
    <name type="common">Rice</name>
    <dbReference type="NCBI Taxonomy" id="39946"/>
    <lineage>
        <taxon>Eukaryota</taxon>
        <taxon>Viridiplantae</taxon>
        <taxon>Streptophyta</taxon>
        <taxon>Embryophyta</taxon>
        <taxon>Tracheophyta</taxon>
        <taxon>Spermatophyta</taxon>
        <taxon>Magnoliopsida</taxon>
        <taxon>Liliopsida</taxon>
        <taxon>Poales</taxon>
        <taxon>Poaceae</taxon>
        <taxon>BOP clade</taxon>
        <taxon>Oryzoideae</taxon>
        <taxon>Oryzeae</taxon>
        <taxon>Oryzinae</taxon>
        <taxon>Oryza</taxon>
        <taxon>Oryza sativa</taxon>
    </lineage>
</organism>
<protein>
    <recommendedName>
        <fullName>Homeobox-leucine zipper protein HOX10</fullName>
    </recommendedName>
    <alternativeName>
        <fullName>HD-ZIP protein HOX10</fullName>
    </alternativeName>
    <alternativeName>
        <fullName>Homeodomain transcription factor HOX10</fullName>
    </alternativeName>
    <alternativeName>
        <fullName>OsHB1</fullName>
    </alternativeName>
    <alternativeName>
        <fullName>OsHox10</fullName>
    </alternativeName>
</protein>
<reference key="1">
    <citation type="journal article" date="2005" name="PLoS Biol.">
        <title>The genomes of Oryza sativa: a history of duplications.</title>
        <authorList>
            <person name="Yu J."/>
            <person name="Wang J."/>
            <person name="Lin W."/>
            <person name="Li S."/>
            <person name="Li H."/>
            <person name="Zhou J."/>
            <person name="Ni P."/>
            <person name="Dong W."/>
            <person name="Hu S."/>
            <person name="Zeng C."/>
            <person name="Zhang J."/>
            <person name="Zhang Y."/>
            <person name="Li R."/>
            <person name="Xu Z."/>
            <person name="Li S."/>
            <person name="Li X."/>
            <person name="Zheng H."/>
            <person name="Cong L."/>
            <person name="Lin L."/>
            <person name="Yin J."/>
            <person name="Geng J."/>
            <person name="Li G."/>
            <person name="Shi J."/>
            <person name="Liu J."/>
            <person name="Lv H."/>
            <person name="Li J."/>
            <person name="Wang J."/>
            <person name="Deng Y."/>
            <person name="Ran L."/>
            <person name="Shi X."/>
            <person name="Wang X."/>
            <person name="Wu Q."/>
            <person name="Li C."/>
            <person name="Ren X."/>
            <person name="Wang J."/>
            <person name="Wang X."/>
            <person name="Li D."/>
            <person name="Liu D."/>
            <person name="Zhang X."/>
            <person name="Ji Z."/>
            <person name="Zhao W."/>
            <person name="Sun Y."/>
            <person name="Zhang Z."/>
            <person name="Bao J."/>
            <person name="Han Y."/>
            <person name="Dong L."/>
            <person name="Ji J."/>
            <person name="Chen P."/>
            <person name="Wu S."/>
            <person name="Liu J."/>
            <person name="Xiao Y."/>
            <person name="Bu D."/>
            <person name="Tan J."/>
            <person name="Yang L."/>
            <person name="Ye C."/>
            <person name="Zhang J."/>
            <person name="Xu J."/>
            <person name="Zhou Y."/>
            <person name="Yu Y."/>
            <person name="Zhang B."/>
            <person name="Zhuang S."/>
            <person name="Wei H."/>
            <person name="Liu B."/>
            <person name="Lei M."/>
            <person name="Yu H."/>
            <person name="Li Y."/>
            <person name="Xu H."/>
            <person name="Wei S."/>
            <person name="He X."/>
            <person name="Fang L."/>
            <person name="Zhang Z."/>
            <person name="Zhang Y."/>
            <person name="Huang X."/>
            <person name="Su Z."/>
            <person name="Tong W."/>
            <person name="Li J."/>
            <person name="Tong Z."/>
            <person name="Li S."/>
            <person name="Ye J."/>
            <person name="Wang L."/>
            <person name="Fang L."/>
            <person name="Lei T."/>
            <person name="Chen C.-S."/>
            <person name="Chen H.-C."/>
            <person name="Xu Z."/>
            <person name="Li H."/>
            <person name="Huang H."/>
            <person name="Zhang F."/>
            <person name="Xu H."/>
            <person name="Li N."/>
            <person name="Zhao C."/>
            <person name="Li S."/>
            <person name="Dong L."/>
            <person name="Huang Y."/>
            <person name="Li L."/>
            <person name="Xi Y."/>
            <person name="Qi Q."/>
            <person name="Li W."/>
            <person name="Zhang B."/>
            <person name="Hu W."/>
            <person name="Zhang Y."/>
            <person name="Tian X."/>
            <person name="Jiao Y."/>
            <person name="Liang X."/>
            <person name="Jin J."/>
            <person name="Gao L."/>
            <person name="Zheng W."/>
            <person name="Hao B."/>
            <person name="Liu S.-M."/>
            <person name="Wang W."/>
            <person name="Yuan L."/>
            <person name="Cao M."/>
            <person name="McDermott J."/>
            <person name="Samudrala R."/>
            <person name="Wang J."/>
            <person name="Wong G.K.-S."/>
            <person name="Yang H."/>
        </authorList>
    </citation>
    <scope>NUCLEOTIDE SEQUENCE [LARGE SCALE GENOMIC DNA]</scope>
    <source>
        <strain>cv. 93-11</strain>
    </source>
</reference>
<reference key="2">
    <citation type="journal article" date="2008" name="Plant Mol. Biol.">
        <title>A genome-wide survey of HD-Zip genes in rice and analysis of drought-responsive family members.</title>
        <authorList>
            <person name="Agalou A."/>
            <person name="Purwantomo S."/>
            <person name="Oevernaes E."/>
            <person name="Johannesson H."/>
            <person name="Zhu X."/>
            <person name="Estiati A."/>
            <person name="de Kam R.J."/>
            <person name="Engstroem P."/>
            <person name="Slamet-Loedin I.H."/>
            <person name="Zhu Z."/>
            <person name="Wang M."/>
            <person name="Xiong L."/>
            <person name="Meijer A.H."/>
            <person name="Ouwerkerk P.B.F."/>
        </authorList>
    </citation>
    <scope>NUCLEOTIDE SEQUENCE [MRNA] OF 730-839 AND 760-839</scope>
    <scope>TISSUE SPECIFICITY</scope>
    <scope>GENE FAMILY</scope>
    <scope>NOMENCLATURE</scope>
    <source>
        <strain>cv. Minghui 86</strain>
        <strain>cv. Pokkali</strain>
    </source>
</reference>
<accession>A2XBL9</accession>
<accession>A5JPU6</accession>
<accession>Q6Q7D7</accession>
<evidence type="ECO:0000250" key="1"/>
<evidence type="ECO:0000255" key="2"/>
<evidence type="ECO:0000255" key="3">
    <source>
        <dbReference type="PROSITE-ProRule" id="PRU00108"/>
    </source>
</evidence>
<evidence type="ECO:0000255" key="4">
    <source>
        <dbReference type="PROSITE-ProRule" id="PRU00197"/>
    </source>
</evidence>
<evidence type="ECO:0000256" key="5">
    <source>
        <dbReference type="SAM" id="MobiDB-lite"/>
    </source>
</evidence>
<evidence type="ECO:0000269" key="6">
    <source>
    </source>
</evidence>
<evidence type="ECO:0000305" key="7"/>
<feature type="chain" id="PRO_0000331692" description="Homeobox-leucine zipper protein HOX10">
    <location>
        <begin position="1"/>
        <end position="839"/>
    </location>
</feature>
<feature type="domain" description="START" evidence="4">
    <location>
        <begin position="155"/>
        <end position="383"/>
    </location>
</feature>
<feature type="DNA-binding region" description="Homeobox" evidence="3">
    <location>
        <begin position="24"/>
        <end position="87"/>
    </location>
</feature>
<feature type="region of interest" description="Disordered" evidence="5">
    <location>
        <begin position="1"/>
        <end position="24"/>
    </location>
</feature>
<feature type="region of interest" description="Disordered" evidence="5">
    <location>
        <begin position="132"/>
        <end position="157"/>
    </location>
</feature>
<feature type="coiled-coil region" evidence="2">
    <location>
        <begin position="91"/>
        <end position="134"/>
    </location>
</feature>
<name>HOX10_ORYSI</name>
<comment type="function">
    <text evidence="1">Probable transcription factor.</text>
</comment>
<comment type="subcellular location">
    <subcellularLocation>
        <location evidence="7">Nucleus</location>
    </subcellularLocation>
</comment>
<comment type="tissue specificity">
    <text evidence="6">Expressed in stems, leaf sheaths and blades and panicles.</text>
</comment>
<comment type="similarity">
    <text evidence="7">Belongs to the HD-ZIP homeobox family. Class III subfamily.</text>
</comment>
<comment type="sequence caution" evidence="7">
    <conflict type="erroneous gene model prediction">
        <sequence resource="EMBL-CDS" id="EAY88229"/>
    </conflict>
</comment>